<name>LEUD_ECO81</name>
<proteinExistence type="inferred from homology"/>
<feature type="chain" id="PRO_1000149414" description="3-isopropylmalate dehydratase small subunit">
    <location>
        <begin position="1"/>
        <end position="201"/>
    </location>
</feature>
<dbReference type="EC" id="4.2.1.33" evidence="1"/>
<dbReference type="EMBL" id="CU928162">
    <property type="protein sequence ID" value="CAR06294.1"/>
    <property type="molecule type" value="Genomic_DNA"/>
</dbReference>
<dbReference type="RefSeq" id="WP_000818231.1">
    <property type="nucleotide sequence ID" value="NC_011745.1"/>
</dbReference>
<dbReference type="SMR" id="B7MNS9"/>
<dbReference type="KEGG" id="ecq:ECED1_0071"/>
<dbReference type="HOGENOM" id="CLU_081378_0_3_6"/>
<dbReference type="UniPathway" id="UPA00048">
    <property type="reaction ID" value="UER00071"/>
</dbReference>
<dbReference type="Proteomes" id="UP000000748">
    <property type="component" value="Chromosome"/>
</dbReference>
<dbReference type="GO" id="GO:0009316">
    <property type="term" value="C:3-isopropylmalate dehydratase complex"/>
    <property type="evidence" value="ECO:0007669"/>
    <property type="project" value="InterPro"/>
</dbReference>
<dbReference type="GO" id="GO:0003861">
    <property type="term" value="F:3-isopropylmalate dehydratase activity"/>
    <property type="evidence" value="ECO:0007669"/>
    <property type="project" value="UniProtKB-UniRule"/>
</dbReference>
<dbReference type="GO" id="GO:0009098">
    <property type="term" value="P:L-leucine biosynthetic process"/>
    <property type="evidence" value="ECO:0007669"/>
    <property type="project" value="UniProtKB-UniRule"/>
</dbReference>
<dbReference type="CDD" id="cd01577">
    <property type="entry name" value="IPMI_Swivel"/>
    <property type="match status" value="1"/>
</dbReference>
<dbReference type="FunFam" id="3.20.19.10:FF:000003">
    <property type="entry name" value="3-isopropylmalate dehydratase small subunit"/>
    <property type="match status" value="1"/>
</dbReference>
<dbReference type="Gene3D" id="3.20.19.10">
    <property type="entry name" value="Aconitase, domain 4"/>
    <property type="match status" value="1"/>
</dbReference>
<dbReference type="HAMAP" id="MF_01031">
    <property type="entry name" value="LeuD_type1"/>
    <property type="match status" value="1"/>
</dbReference>
<dbReference type="InterPro" id="IPR004431">
    <property type="entry name" value="3-IsopropMal_deHydase_ssu"/>
</dbReference>
<dbReference type="InterPro" id="IPR015928">
    <property type="entry name" value="Aconitase/3IPM_dehydase_swvl"/>
</dbReference>
<dbReference type="InterPro" id="IPR000573">
    <property type="entry name" value="AconitaseA/IPMdHydase_ssu_swvl"/>
</dbReference>
<dbReference type="InterPro" id="IPR033940">
    <property type="entry name" value="IPMI_Swivel"/>
</dbReference>
<dbReference type="InterPro" id="IPR050075">
    <property type="entry name" value="LeuD"/>
</dbReference>
<dbReference type="NCBIfam" id="TIGR00171">
    <property type="entry name" value="leuD"/>
    <property type="match status" value="1"/>
</dbReference>
<dbReference type="NCBIfam" id="NF002458">
    <property type="entry name" value="PRK01641.1"/>
    <property type="match status" value="1"/>
</dbReference>
<dbReference type="PANTHER" id="PTHR43345:SF5">
    <property type="entry name" value="3-ISOPROPYLMALATE DEHYDRATASE SMALL SUBUNIT"/>
    <property type="match status" value="1"/>
</dbReference>
<dbReference type="PANTHER" id="PTHR43345">
    <property type="entry name" value="3-ISOPROPYLMALATE DEHYDRATASE SMALL SUBUNIT 2-RELATED-RELATED"/>
    <property type="match status" value="1"/>
</dbReference>
<dbReference type="Pfam" id="PF00694">
    <property type="entry name" value="Aconitase_C"/>
    <property type="match status" value="1"/>
</dbReference>
<dbReference type="SUPFAM" id="SSF52016">
    <property type="entry name" value="LeuD/IlvD-like"/>
    <property type="match status" value="1"/>
</dbReference>
<accession>B7MNS9</accession>
<reference key="1">
    <citation type="journal article" date="2009" name="PLoS Genet.">
        <title>Organised genome dynamics in the Escherichia coli species results in highly diverse adaptive paths.</title>
        <authorList>
            <person name="Touchon M."/>
            <person name="Hoede C."/>
            <person name="Tenaillon O."/>
            <person name="Barbe V."/>
            <person name="Baeriswyl S."/>
            <person name="Bidet P."/>
            <person name="Bingen E."/>
            <person name="Bonacorsi S."/>
            <person name="Bouchier C."/>
            <person name="Bouvet O."/>
            <person name="Calteau A."/>
            <person name="Chiapello H."/>
            <person name="Clermont O."/>
            <person name="Cruveiller S."/>
            <person name="Danchin A."/>
            <person name="Diard M."/>
            <person name="Dossat C."/>
            <person name="Karoui M.E."/>
            <person name="Frapy E."/>
            <person name="Garry L."/>
            <person name="Ghigo J.M."/>
            <person name="Gilles A.M."/>
            <person name="Johnson J."/>
            <person name="Le Bouguenec C."/>
            <person name="Lescat M."/>
            <person name="Mangenot S."/>
            <person name="Martinez-Jehanne V."/>
            <person name="Matic I."/>
            <person name="Nassif X."/>
            <person name="Oztas S."/>
            <person name="Petit M.A."/>
            <person name="Pichon C."/>
            <person name="Rouy Z."/>
            <person name="Ruf C.S."/>
            <person name="Schneider D."/>
            <person name="Tourret J."/>
            <person name="Vacherie B."/>
            <person name="Vallenet D."/>
            <person name="Medigue C."/>
            <person name="Rocha E.P.C."/>
            <person name="Denamur E."/>
        </authorList>
    </citation>
    <scope>NUCLEOTIDE SEQUENCE [LARGE SCALE GENOMIC DNA]</scope>
    <source>
        <strain>ED1a</strain>
    </source>
</reference>
<comment type="function">
    <text evidence="1">Catalyzes the isomerization between 2-isopropylmalate and 3-isopropylmalate, via the formation of 2-isopropylmaleate.</text>
</comment>
<comment type="catalytic activity">
    <reaction evidence="1">
        <text>(2R,3S)-3-isopropylmalate = (2S)-2-isopropylmalate</text>
        <dbReference type="Rhea" id="RHEA:32287"/>
        <dbReference type="ChEBI" id="CHEBI:1178"/>
        <dbReference type="ChEBI" id="CHEBI:35121"/>
        <dbReference type="EC" id="4.2.1.33"/>
    </reaction>
</comment>
<comment type="pathway">
    <text evidence="1">Amino-acid biosynthesis; L-leucine biosynthesis; L-leucine from 3-methyl-2-oxobutanoate: step 2/4.</text>
</comment>
<comment type="subunit">
    <text evidence="1">Heterodimer of LeuC and LeuD.</text>
</comment>
<comment type="similarity">
    <text evidence="1">Belongs to the LeuD family. LeuD type 1 subfamily.</text>
</comment>
<sequence length="201" mass="22604">MAEKFIKHTGLVVPLDAANVDTDAIIPKQFLQKVTRTGFGAHLFNDWRFLDEKGQQPNPDFVLNFPQYQGASILLARENFGCGSSREHAPWALTDYGFKVVIAPSFADIFYGNSFNNQLLPVKLSDAEVDELFALVKANPGIHFDVDLEAQEVKAGEKTYRFTIDAFRRHCMMNGLDSIGLTLQHDDAIASYEEKQPAFMR</sequence>
<protein>
    <recommendedName>
        <fullName evidence="1">3-isopropylmalate dehydratase small subunit</fullName>
        <ecNumber evidence="1">4.2.1.33</ecNumber>
    </recommendedName>
    <alternativeName>
        <fullName evidence="1">Alpha-IPM isomerase</fullName>
        <shortName evidence="1">IPMI</shortName>
    </alternativeName>
    <alternativeName>
        <fullName evidence="1">Isopropylmalate isomerase</fullName>
    </alternativeName>
</protein>
<evidence type="ECO:0000255" key="1">
    <source>
        <dbReference type="HAMAP-Rule" id="MF_01031"/>
    </source>
</evidence>
<gene>
    <name evidence="1" type="primary">leuD</name>
    <name type="ordered locus">ECED1_0071</name>
</gene>
<organism>
    <name type="scientific">Escherichia coli O81 (strain ED1a)</name>
    <dbReference type="NCBI Taxonomy" id="585397"/>
    <lineage>
        <taxon>Bacteria</taxon>
        <taxon>Pseudomonadati</taxon>
        <taxon>Pseudomonadota</taxon>
        <taxon>Gammaproteobacteria</taxon>
        <taxon>Enterobacterales</taxon>
        <taxon>Enterobacteriaceae</taxon>
        <taxon>Escherichia</taxon>
    </lineage>
</organism>
<keyword id="KW-0028">Amino-acid biosynthesis</keyword>
<keyword id="KW-0100">Branched-chain amino acid biosynthesis</keyword>
<keyword id="KW-0432">Leucine biosynthesis</keyword>
<keyword id="KW-0456">Lyase</keyword>